<reference evidence="5" key="1">
    <citation type="journal article" date="2021" name="Biochem. J.">
        <title>Isolation and functional diversity of Bowman-Birk type serine proteinase inhibitors from Hyacinthus orientalis.</title>
        <authorList>
            <person name="Aoki-Shioi N."/>
            <person name="Terada S."/>
            <person name="Hellinger R."/>
            <person name="Furuta Y."/>
            <person name="Gruber C.W."/>
        </authorList>
    </citation>
    <scope>PROTEIN SEQUENCE OF 53-69</scope>
    <scope>TISSUE SPECIFICITY</scope>
    <source>
        <tissue evidence="4">Bulb</tissue>
    </source>
</reference>
<reference evidence="5" key="2">
    <citation type="submission" date="2022-05" db="UniProtKB">
        <title>Isolation and functional diversity of Bowman-Birk type serine proteinase inhibitors from Liliaceae orientalis.</title>
        <authorList>
            <person name="Aoki-Shioi N."/>
            <person name="Terada S."/>
            <person name="Hellinger R."/>
            <person name="Furuta Y."/>
            <person name="Gruber C.W."/>
        </authorList>
    </citation>
    <scope>PROTEIN SEQUENCE</scope>
    <scope>FUNCTION</scope>
</reference>
<proteinExistence type="evidence at protein level"/>
<accession>C0HM40</accession>
<sequence>QTWPPVEGRPSCKRCGACTRMWPPEANRCVCDDIVPQCHEGCSKCEKVDTRSGKPLYQCQSFEYYNCAA</sequence>
<feature type="chain" id="PRO_0000456467" description="Bowman-Birk type proteinase inhibitor A2">
    <location>
        <begin position="1"/>
        <end position="69"/>
    </location>
</feature>
<feature type="site" description="Reactive bond for trypsin" evidence="1">
    <location>
        <begin position="20"/>
        <end position="21"/>
    </location>
</feature>
<feature type="disulfide bond" evidence="1">
    <location>
        <begin position="12"/>
        <end position="31"/>
    </location>
</feature>
<feature type="disulfide bond" evidence="1">
    <location>
        <begin position="18"/>
        <end position="29"/>
    </location>
</feature>
<feature type="disulfide bond" evidence="1">
    <location>
        <begin position="38"/>
        <end position="45"/>
    </location>
</feature>
<feature type="disulfide bond" evidence="1">
    <location>
        <begin position="42"/>
        <end position="59"/>
    </location>
</feature>
<evidence type="ECO:0000250" key="1">
    <source>
        <dbReference type="UniProtKB" id="P80321"/>
    </source>
</evidence>
<evidence type="ECO:0000269" key="2">
    <source>
    </source>
</evidence>
<evidence type="ECO:0000269" key="3">
    <source ref="2"/>
</evidence>
<evidence type="ECO:0000303" key="4">
    <source>
    </source>
</evidence>
<evidence type="ECO:0000305" key="5"/>
<keyword id="KW-0903">Direct protein sequencing</keyword>
<keyword id="KW-1015">Disulfide bond</keyword>
<keyword id="KW-0646">Protease inhibitor</keyword>
<keyword id="KW-0722">Serine protease inhibitor</keyword>
<comment type="function">
    <text evidence="3">Serine protease inhibitor.</text>
</comment>
<comment type="tissue specificity">
    <text evidence="2">Expressed in bulb (at protein level).</text>
</comment>
<comment type="similarity">
    <text evidence="5">Belongs to the Bowman-Birk serine protease inhibitor family.</text>
</comment>
<dbReference type="SMR" id="C0HM40"/>
<dbReference type="GO" id="GO:0005576">
    <property type="term" value="C:extracellular region"/>
    <property type="evidence" value="ECO:0007669"/>
    <property type="project" value="InterPro"/>
</dbReference>
<dbReference type="GO" id="GO:0004867">
    <property type="term" value="F:serine-type endopeptidase inhibitor activity"/>
    <property type="evidence" value="ECO:0007669"/>
    <property type="project" value="UniProtKB-KW"/>
</dbReference>
<dbReference type="Gene3D" id="2.10.69.10">
    <property type="entry name" value="Cysteine Protease (Bromelain) Inhibitor, subunit H"/>
    <property type="match status" value="1"/>
</dbReference>
<dbReference type="InterPro" id="IPR035995">
    <property type="entry name" value="Bowman-Birk_prot_inh"/>
</dbReference>
<dbReference type="InterPro" id="IPR000877">
    <property type="entry name" value="Prot_inh_BBI"/>
</dbReference>
<dbReference type="Pfam" id="PF00228">
    <property type="entry name" value="Bowman-Birk_leg"/>
    <property type="match status" value="1"/>
</dbReference>
<dbReference type="SMART" id="SM00269">
    <property type="entry name" value="BowB"/>
    <property type="match status" value="1"/>
</dbReference>
<dbReference type="SUPFAM" id="SSF57247">
    <property type="entry name" value="Bowman-Birk inhibitor, BBI"/>
    <property type="match status" value="1"/>
</dbReference>
<name>IBBA2_HYAOR</name>
<organism>
    <name type="scientific">Hyacinthus orientalis</name>
    <name type="common">Common hyacinth</name>
    <dbReference type="NCBI Taxonomy" id="82025"/>
    <lineage>
        <taxon>Eukaryota</taxon>
        <taxon>Viridiplantae</taxon>
        <taxon>Streptophyta</taxon>
        <taxon>Embryophyta</taxon>
        <taxon>Tracheophyta</taxon>
        <taxon>Spermatophyta</taxon>
        <taxon>Magnoliopsida</taxon>
        <taxon>Liliopsida</taxon>
        <taxon>Asparagales</taxon>
        <taxon>Hyacinthaceae</taxon>
        <taxon>Hyacinthoideae</taxon>
        <taxon>Hyacintheae</taxon>
        <taxon>Hyacinthus</taxon>
    </lineage>
</organism>
<protein>
    <recommendedName>
        <fullName evidence="4">Bowman-Birk type proteinase inhibitor A2</fullName>
        <shortName evidence="4">HOSPI-A2</shortName>
    </recommendedName>
</protein>